<accession>B1LBM9</accession>
<evidence type="ECO:0000255" key="1">
    <source>
        <dbReference type="HAMAP-Rule" id="MF_01326"/>
    </source>
</evidence>
<evidence type="ECO:0000305" key="2"/>
<keyword id="KW-0687">Ribonucleoprotein</keyword>
<keyword id="KW-0689">Ribosomal protein</keyword>
<keyword id="KW-0694">RNA-binding</keyword>
<keyword id="KW-0699">rRNA-binding</keyword>
<comment type="function">
    <text evidence="1">One of two assembly initiator proteins, it binds directly to the 5'-end of the 23S rRNA, where it nucleates assembly of the 50S subunit.</text>
</comment>
<comment type="function">
    <text evidence="1">One of the proteins that surrounds the polypeptide exit tunnel on the outside of the subunit.</text>
</comment>
<comment type="subunit">
    <text evidence="1">Part of the 50S ribosomal subunit.</text>
</comment>
<comment type="similarity">
    <text evidence="1">Belongs to the universal ribosomal protein uL24 family.</text>
</comment>
<feature type="chain" id="PRO_1000142050" description="Large ribosomal subunit protein uL24">
    <location>
        <begin position="1"/>
        <end position="105"/>
    </location>
</feature>
<proteinExistence type="inferred from homology"/>
<sequence>MRIKKGDLVEVISGKDKGKRGKVLRVIPKENKVIVENVNMVKRHQRPIPQLREGGIIEREAPIYASKVMVVCPACDKRTRVGYRFTEDGKKVRYCKKCGEIIDKD</sequence>
<protein>
    <recommendedName>
        <fullName evidence="1">Large ribosomal subunit protein uL24</fullName>
    </recommendedName>
    <alternativeName>
        <fullName evidence="2">50S ribosomal protein L24</fullName>
    </alternativeName>
</protein>
<reference key="1">
    <citation type="journal article" date="2011" name="J. Bacteriol.">
        <title>Genome sequence of Thermotoga sp. strain RQ2, a hyperthermophilic bacterium isolated from a geothermally heated region of the seafloor near Ribeira Quente, the Azores.</title>
        <authorList>
            <person name="Swithers K.S."/>
            <person name="DiPippo J.L."/>
            <person name="Bruce D.C."/>
            <person name="Detter C."/>
            <person name="Tapia R."/>
            <person name="Han S."/>
            <person name="Saunders E."/>
            <person name="Goodwin L.A."/>
            <person name="Han J."/>
            <person name="Woyke T."/>
            <person name="Pitluck S."/>
            <person name="Pennacchio L."/>
            <person name="Nolan M."/>
            <person name="Mikhailova N."/>
            <person name="Lykidis A."/>
            <person name="Land M.L."/>
            <person name="Brettin T."/>
            <person name="Stetter K.O."/>
            <person name="Nelson K.E."/>
            <person name="Gogarten J.P."/>
            <person name="Noll K.M."/>
        </authorList>
    </citation>
    <scope>NUCLEOTIDE SEQUENCE [LARGE SCALE GENOMIC DNA]</scope>
    <source>
        <strain>RQ2</strain>
    </source>
</reference>
<dbReference type="EMBL" id="CP000969">
    <property type="protein sequence ID" value="ACB09727.1"/>
    <property type="molecule type" value="Genomic_DNA"/>
</dbReference>
<dbReference type="RefSeq" id="WP_011943791.1">
    <property type="nucleotide sequence ID" value="NC_010483.1"/>
</dbReference>
<dbReference type="SMR" id="B1LBM9"/>
<dbReference type="KEGG" id="trq:TRQ2_1383"/>
<dbReference type="HOGENOM" id="CLU_093315_2_0_0"/>
<dbReference type="Proteomes" id="UP000001687">
    <property type="component" value="Chromosome"/>
</dbReference>
<dbReference type="GO" id="GO:1990904">
    <property type="term" value="C:ribonucleoprotein complex"/>
    <property type="evidence" value="ECO:0007669"/>
    <property type="project" value="UniProtKB-KW"/>
</dbReference>
<dbReference type="GO" id="GO:0005840">
    <property type="term" value="C:ribosome"/>
    <property type="evidence" value="ECO:0007669"/>
    <property type="project" value="UniProtKB-KW"/>
</dbReference>
<dbReference type="GO" id="GO:0019843">
    <property type="term" value="F:rRNA binding"/>
    <property type="evidence" value="ECO:0007669"/>
    <property type="project" value="UniProtKB-UniRule"/>
</dbReference>
<dbReference type="GO" id="GO:0003735">
    <property type="term" value="F:structural constituent of ribosome"/>
    <property type="evidence" value="ECO:0007669"/>
    <property type="project" value="InterPro"/>
</dbReference>
<dbReference type="GO" id="GO:0006412">
    <property type="term" value="P:translation"/>
    <property type="evidence" value="ECO:0007669"/>
    <property type="project" value="UniProtKB-UniRule"/>
</dbReference>
<dbReference type="CDD" id="cd06089">
    <property type="entry name" value="KOW_RPL26"/>
    <property type="match status" value="1"/>
</dbReference>
<dbReference type="FunFam" id="2.30.30.30:FF:000004">
    <property type="entry name" value="50S ribosomal protein L24"/>
    <property type="match status" value="1"/>
</dbReference>
<dbReference type="Gene3D" id="2.30.30.30">
    <property type="match status" value="1"/>
</dbReference>
<dbReference type="HAMAP" id="MF_01326_B">
    <property type="entry name" value="Ribosomal_uL24_B"/>
    <property type="match status" value="1"/>
</dbReference>
<dbReference type="InterPro" id="IPR005824">
    <property type="entry name" value="KOW"/>
</dbReference>
<dbReference type="InterPro" id="IPR014722">
    <property type="entry name" value="Rib_uL2_dom2"/>
</dbReference>
<dbReference type="InterPro" id="IPR003256">
    <property type="entry name" value="Ribosomal_uL24"/>
</dbReference>
<dbReference type="InterPro" id="IPR005825">
    <property type="entry name" value="Ribosomal_uL24_CS"/>
</dbReference>
<dbReference type="InterPro" id="IPR041988">
    <property type="entry name" value="Ribosomal_uL24_KOW"/>
</dbReference>
<dbReference type="InterPro" id="IPR008991">
    <property type="entry name" value="Translation_prot_SH3-like_sf"/>
</dbReference>
<dbReference type="NCBIfam" id="TIGR01079">
    <property type="entry name" value="rplX_bact"/>
    <property type="match status" value="1"/>
</dbReference>
<dbReference type="PANTHER" id="PTHR12903">
    <property type="entry name" value="MITOCHONDRIAL RIBOSOMAL PROTEIN L24"/>
    <property type="match status" value="1"/>
</dbReference>
<dbReference type="Pfam" id="PF00467">
    <property type="entry name" value="KOW"/>
    <property type="match status" value="1"/>
</dbReference>
<dbReference type="Pfam" id="PF17136">
    <property type="entry name" value="ribosomal_L24"/>
    <property type="match status" value="1"/>
</dbReference>
<dbReference type="SMART" id="SM00739">
    <property type="entry name" value="KOW"/>
    <property type="match status" value="1"/>
</dbReference>
<dbReference type="SUPFAM" id="SSF50104">
    <property type="entry name" value="Translation proteins SH3-like domain"/>
    <property type="match status" value="1"/>
</dbReference>
<dbReference type="PROSITE" id="PS01108">
    <property type="entry name" value="RIBOSOMAL_L24"/>
    <property type="match status" value="1"/>
</dbReference>
<name>RL24_THESQ</name>
<gene>
    <name evidence="1" type="primary">rplX</name>
    <name type="ordered locus">TRQ2_1383</name>
</gene>
<organism>
    <name type="scientific">Thermotoga sp. (strain RQ2)</name>
    <dbReference type="NCBI Taxonomy" id="126740"/>
    <lineage>
        <taxon>Bacteria</taxon>
        <taxon>Thermotogati</taxon>
        <taxon>Thermotogota</taxon>
        <taxon>Thermotogae</taxon>
        <taxon>Thermotogales</taxon>
        <taxon>Thermotogaceae</taxon>
        <taxon>Thermotoga</taxon>
    </lineage>
</organism>